<sequence>MIHHIPNVLTKQQVAEFRALMDTAQWVNGKVTAGTLSASVKHNQQLSEQDPLTHHLSDLVIQAIWNNPAFQTAALPHHIIPPLFNRYDEHESFGFHVDNSIRLIRGTSQQMRTDLSCTLFLSEPEEYDGGDLVIEDTYGYHEVKLPAGDLVLYPSTSLHEVSSITRGSRFASFFWVQSLVRDDTKRHLLFNLDETVRSLRIQHGDGYPEVVKLTNIYHNLIRMWSEV</sequence>
<organism>
    <name type="scientific">Acinetobacter baylyi (strain ATCC 33305 / BD413 / ADP1)</name>
    <dbReference type="NCBI Taxonomy" id="62977"/>
    <lineage>
        <taxon>Bacteria</taxon>
        <taxon>Pseudomonadati</taxon>
        <taxon>Pseudomonadota</taxon>
        <taxon>Gammaproteobacteria</taxon>
        <taxon>Moraxellales</taxon>
        <taxon>Moraxellaceae</taxon>
        <taxon>Acinetobacter</taxon>
    </lineage>
</organism>
<evidence type="ECO:0000255" key="1">
    <source>
        <dbReference type="HAMAP-Rule" id="MF_00657"/>
    </source>
</evidence>
<keyword id="KW-0223">Dioxygenase</keyword>
<keyword id="KW-0408">Iron</keyword>
<keyword id="KW-0479">Metal-binding</keyword>
<keyword id="KW-0560">Oxidoreductase</keyword>
<keyword id="KW-0847">Vitamin C</keyword>
<gene>
    <name type="ordered locus">ACIAD0531</name>
</gene>
<name>Y531_ACIAD</name>
<feature type="chain" id="PRO_1000061706" description="PKHD-type hydroxylase ACIAD0531">
    <location>
        <begin position="1"/>
        <end position="227"/>
    </location>
</feature>
<feature type="domain" description="Fe2OG dioxygenase" evidence="1">
    <location>
        <begin position="78"/>
        <end position="178"/>
    </location>
</feature>
<feature type="binding site" evidence="1">
    <location>
        <position position="96"/>
    </location>
    <ligand>
        <name>Fe cation</name>
        <dbReference type="ChEBI" id="CHEBI:24875"/>
    </ligand>
</feature>
<feature type="binding site" evidence="1">
    <location>
        <position position="98"/>
    </location>
    <ligand>
        <name>Fe cation</name>
        <dbReference type="ChEBI" id="CHEBI:24875"/>
    </ligand>
</feature>
<feature type="binding site" evidence="1">
    <location>
        <position position="159"/>
    </location>
    <ligand>
        <name>Fe cation</name>
        <dbReference type="ChEBI" id="CHEBI:24875"/>
    </ligand>
</feature>
<feature type="binding site" evidence="1">
    <location>
        <position position="169"/>
    </location>
    <ligand>
        <name>2-oxoglutarate</name>
        <dbReference type="ChEBI" id="CHEBI:16810"/>
    </ligand>
</feature>
<comment type="cofactor">
    <cofactor evidence="1">
        <name>Fe(2+)</name>
        <dbReference type="ChEBI" id="CHEBI:29033"/>
    </cofactor>
    <text evidence="1">Binds 1 Fe(2+) ion per subunit.</text>
</comment>
<comment type="cofactor">
    <cofactor evidence="1">
        <name>L-ascorbate</name>
        <dbReference type="ChEBI" id="CHEBI:38290"/>
    </cofactor>
</comment>
<dbReference type="EC" id="1.14.11.-" evidence="1"/>
<dbReference type="EMBL" id="CR543861">
    <property type="protein sequence ID" value="CAG67457.1"/>
    <property type="molecule type" value="Genomic_DNA"/>
</dbReference>
<dbReference type="RefSeq" id="WP_004920076.1">
    <property type="nucleotide sequence ID" value="NC_005966.1"/>
</dbReference>
<dbReference type="SMR" id="Q6FEQ1"/>
<dbReference type="STRING" id="202950.GCA_001485005_00769"/>
<dbReference type="GeneID" id="45233010"/>
<dbReference type="KEGG" id="aci:ACIAD0531"/>
<dbReference type="eggNOG" id="COG3128">
    <property type="taxonomic scope" value="Bacteria"/>
</dbReference>
<dbReference type="HOGENOM" id="CLU_106663_0_0_6"/>
<dbReference type="OrthoDB" id="9812472at2"/>
<dbReference type="BioCyc" id="ASP62977:ACIAD_RS02410-MONOMER"/>
<dbReference type="Proteomes" id="UP000000430">
    <property type="component" value="Chromosome"/>
</dbReference>
<dbReference type="GO" id="GO:0016706">
    <property type="term" value="F:2-oxoglutarate-dependent dioxygenase activity"/>
    <property type="evidence" value="ECO:0007669"/>
    <property type="project" value="UniProtKB-UniRule"/>
</dbReference>
<dbReference type="GO" id="GO:0005506">
    <property type="term" value="F:iron ion binding"/>
    <property type="evidence" value="ECO:0007669"/>
    <property type="project" value="UniProtKB-UniRule"/>
</dbReference>
<dbReference type="GO" id="GO:0031418">
    <property type="term" value="F:L-ascorbic acid binding"/>
    <property type="evidence" value="ECO:0007669"/>
    <property type="project" value="UniProtKB-KW"/>
</dbReference>
<dbReference type="GO" id="GO:0006974">
    <property type="term" value="P:DNA damage response"/>
    <property type="evidence" value="ECO:0007669"/>
    <property type="project" value="TreeGrafter"/>
</dbReference>
<dbReference type="GO" id="GO:0006879">
    <property type="term" value="P:intracellular iron ion homeostasis"/>
    <property type="evidence" value="ECO:0007669"/>
    <property type="project" value="TreeGrafter"/>
</dbReference>
<dbReference type="Gene3D" id="2.60.120.620">
    <property type="entry name" value="q2cbj1_9rhob like domain"/>
    <property type="match status" value="1"/>
</dbReference>
<dbReference type="Gene3D" id="4.10.860.20">
    <property type="entry name" value="Rabenosyn, Rab binding domain"/>
    <property type="match status" value="1"/>
</dbReference>
<dbReference type="HAMAP" id="MF_00657">
    <property type="entry name" value="Hydroxyl_YbiX"/>
    <property type="match status" value="1"/>
</dbReference>
<dbReference type="InterPro" id="IPR005123">
    <property type="entry name" value="Oxoglu/Fe-dep_dioxygenase_dom"/>
</dbReference>
<dbReference type="InterPro" id="IPR041097">
    <property type="entry name" value="PKHD_C"/>
</dbReference>
<dbReference type="InterPro" id="IPR023550">
    <property type="entry name" value="PKHD_hydroxylase"/>
</dbReference>
<dbReference type="InterPro" id="IPR006620">
    <property type="entry name" value="Pro_4_hyd_alph"/>
</dbReference>
<dbReference type="InterPro" id="IPR044862">
    <property type="entry name" value="Pro_4_hyd_alph_FE2OG_OXY"/>
</dbReference>
<dbReference type="NCBIfam" id="NF003974">
    <property type="entry name" value="PRK05467.1-3"/>
    <property type="match status" value="1"/>
</dbReference>
<dbReference type="NCBIfam" id="NF003975">
    <property type="entry name" value="PRK05467.1-4"/>
    <property type="match status" value="1"/>
</dbReference>
<dbReference type="PANTHER" id="PTHR41536">
    <property type="entry name" value="PKHD-TYPE HYDROXYLASE YBIX"/>
    <property type="match status" value="1"/>
</dbReference>
<dbReference type="PANTHER" id="PTHR41536:SF1">
    <property type="entry name" value="PKHD-TYPE HYDROXYLASE YBIX"/>
    <property type="match status" value="1"/>
</dbReference>
<dbReference type="Pfam" id="PF13640">
    <property type="entry name" value="2OG-FeII_Oxy_3"/>
    <property type="match status" value="1"/>
</dbReference>
<dbReference type="Pfam" id="PF18331">
    <property type="entry name" value="PKHD_C"/>
    <property type="match status" value="1"/>
</dbReference>
<dbReference type="SMART" id="SM00702">
    <property type="entry name" value="P4Hc"/>
    <property type="match status" value="1"/>
</dbReference>
<dbReference type="SUPFAM" id="SSF51197">
    <property type="entry name" value="Clavaminate synthase-like"/>
    <property type="match status" value="1"/>
</dbReference>
<dbReference type="PROSITE" id="PS51471">
    <property type="entry name" value="FE2OG_OXY"/>
    <property type="match status" value="1"/>
</dbReference>
<reference key="1">
    <citation type="journal article" date="2004" name="Nucleic Acids Res.">
        <title>Unique features revealed by the genome sequence of Acinetobacter sp. ADP1, a versatile and naturally transformation competent bacterium.</title>
        <authorList>
            <person name="Barbe V."/>
            <person name="Vallenet D."/>
            <person name="Fonknechten N."/>
            <person name="Kreimeyer A."/>
            <person name="Oztas S."/>
            <person name="Labarre L."/>
            <person name="Cruveiller S."/>
            <person name="Robert C."/>
            <person name="Duprat S."/>
            <person name="Wincker P."/>
            <person name="Ornston L.N."/>
            <person name="Weissenbach J."/>
            <person name="Marliere P."/>
            <person name="Cohen G.N."/>
            <person name="Medigue C."/>
        </authorList>
    </citation>
    <scope>NUCLEOTIDE SEQUENCE [LARGE SCALE GENOMIC DNA]</scope>
    <source>
        <strain>ATCC 33305 / BD413 / ADP1</strain>
    </source>
</reference>
<proteinExistence type="inferred from homology"/>
<protein>
    <recommendedName>
        <fullName evidence="1">PKHD-type hydroxylase ACIAD0531</fullName>
        <ecNumber evidence="1">1.14.11.-</ecNumber>
    </recommendedName>
</protein>
<accession>Q6FEQ1</accession>